<organism>
    <name type="scientific">Streptococcus gordonii (strain Challis / ATCC 35105 / BCRC 15272 / CH1 / DL1 / V288)</name>
    <dbReference type="NCBI Taxonomy" id="467705"/>
    <lineage>
        <taxon>Bacteria</taxon>
        <taxon>Bacillati</taxon>
        <taxon>Bacillota</taxon>
        <taxon>Bacilli</taxon>
        <taxon>Lactobacillales</taxon>
        <taxon>Streptococcaceae</taxon>
        <taxon>Streptococcus</taxon>
    </lineage>
</organism>
<accession>A8AXD5</accession>
<keyword id="KW-0963">Cytoplasm</keyword>
<keyword id="KW-0328">Glycosyltransferase</keyword>
<keyword id="KW-0660">Purine salvage</keyword>
<keyword id="KW-1185">Reference proteome</keyword>
<keyword id="KW-0808">Transferase</keyword>
<feature type="chain" id="PRO_0000339762" description="Xanthine phosphoribosyltransferase">
    <location>
        <begin position="1"/>
        <end position="193"/>
    </location>
</feature>
<feature type="binding site" evidence="1">
    <location>
        <position position="20"/>
    </location>
    <ligand>
        <name>xanthine</name>
        <dbReference type="ChEBI" id="CHEBI:17712"/>
    </ligand>
</feature>
<feature type="binding site" evidence="1">
    <location>
        <position position="27"/>
    </location>
    <ligand>
        <name>xanthine</name>
        <dbReference type="ChEBI" id="CHEBI:17712"/>
    </ligand>
</feature>
<feature type="binding site" evidence="1">
    <location>
        <begin position="128"/>
        <end position="132"/>
    </location>
    <ligand>
        <name>5-phospho-alpha-D-ribose 1-diphosphate</name>
        <dbReference type="ChEBI" id="CHEBI:58017"/>
    </ligand>
</feature>
<feature type="binding site" evidence="1">
    <location>
        <position position="156"/>
    </location>
    <ligand>
        <name>xanthine</name>
        <dbReference type="ChEBI" id="CHEBI:17712"/>
    </ligand>
</feature>
<dbReference type="EC" id="2.4.2.22" evidence="1"/>
<dbReference type="EMBL" id="CP000725">
    <property type="protein sequence ID" value="ABV10839.1"/>
    <property type="molecule type" value="Genomic_DNA"/>
</dbReference>
<dbReference type="RefSeq" id="WP_012000562.1">
    <property type="nucleotide sequence ID" value="NC_009785.1"/>
</dbReference>
<dbReference type="SMR" id="A8AXD5"/>
<dbReference type="STRING" id="467705.SGO_1158"/>
<dbReference type="KEGG" id="sgo:SGO_1158"/>
<dbReference type="eggNOG" id="COG0503">
    <property type="taxonomic scope" value="Bacteria"/>
</dbReference>
<dbReference type="HOGENOM" id="CLU_099015_0_0_9"/>
<dbReference type="UniPathway" id="UPA00602">
    <property type="reaction ID" value="UER00658"/>
</dbReference>
<dbReference type="Proteomes" id="UP000001131">
    <property type="component" value="Chromosome"/>
</dbReference>
<dbReference type="GO" id="GO:0005737">
    <property type="term" value="C:cytoplasm"/>
    <property type="evidence" value="ECO:0007669"/>
    <property type="project" value="UniProtKB-SubCell"/>
</dbReference>
<dbReference type="GO" id="GO:0000310">
    <property type="term" value="F:xanthine phosphoribosyltransferase activity"/>
    <property type="evidence" value="ECO:0007669"/>
    <property type="project" value="UniProtKB-UniRule"/>
</dbReference>
<dbReference type="GO" id="GO:0006166">
    <property type="term" value="P:purine ribonucleoside salvage"/>
    <property type="evidence" value="ECO:0007669"/>
    <property type="project" value="UniProtKB-KW"/>
</dbReference>
<dbReference type="GO" id="GO:0046110">
    <property type="term" value="P:xanthine metabolic process"/>
    <property type="evidence" value="ECO:0007669"/>
    <property type="project" value="InterPro"/>
</dbReference>
<dbReference type="GO" id="GO:0032265">
    <property type="term" value="P:XMP salvage"/>
    <property type="evidence" value="ECO:0007669"/>
    <property type="project" value="UniProtKB-UniRule"/>
</dbReference>
<dbReference type="CDD" id="cd06223">
    <property type="entry name" value="PRTases_typeI"/>
    <property type="match status" value="1"/>
</dbReference>
<dbReference type="Gene3D" id="3.40.50.2020">
    <property type="match status" value="1"/>
</dbReference>
<dbReference type="HAMAP" id="MF_01184">
    <property type="entry name" value="XPRTase"/>
    <property type="match status" value="1"/>
</dbReference>
<dbReference type="InterPro" id="IPR000836">
    <property type="entry name" value="PRibTrfase_dom"/>
</dbReference>
<dbReference type="InterPro" id="IPR029057">
    <property type="entry name" value="PRTase-like"/>
</dbReference>
<dbReference type="InterPro" id="IPR050118">
    <property type="entry name" value="Pur/Pyrimidine_PRTase"/>
</dbReference>
<dbReference type="InterPro" id="IPR010079">
    <property type="entry name" value="Xanthine_PRibTrfase"/>
</dbReference>
<dbReference type="NCBIfam" id="NF006671">
    <property type="entry name" value="PRK09219.1"/>
    <property type="match status" value="1"/>
</dbReference>
<dbReference type="NCBIfam" id="TIGR01744">
    <property type="entry name" value="XPRTase"/>
    <property type="match status" value="1"/>
</dbReference>
<dbReference type="PANTHER" id="PTHR43864">
    <property type="entry name" value="HYPOXANTHINE/GUANINE PHOSPHORIBOSYLTRANSFERASE"/>
    <property type="match status" value="1"/>
</dbReference>
<dbReference type="PANTHER" id="PTHR43864:SF1">
    <property type="entry name" value="XANTHINE PHOSPHORIBOSYLTRANSFERASE"/>
    <property type="match status" value="1"/>
</dbReference>
<dbReference type="Pfam" id="PF00156">
    <property type="entry name" value="Pribosyltran"/>
    <property type="match status" value="1"/>
</dbReference>
<dbReference type="SUPFAM" id="SSF53271">
    <property type="entry name" value="PRTase-like"/>
    <property type="match status" value="1"/>
</dbReference>
<protein>
    <recommendedName>
        <fullName evidence="1">Xanthine phosphoribosyltransferase</fullName>
        <shortName evidence="1">XPRTase</shortName>
        <ecNumber evidence="1">2.4.2.22</ecNumber>
    </recommendedName>
</protein>
<sequence>MKKLEERILRDGNVLGENILKVDSFLTHQVDFTLMKEIGQVFADIFHESGITKVVTIEASGIAPAVYTAEALGVPMIFAKKAKNITMTEGILTAEVYSFTKQVTSTVSIAGKFLSPSDKVLVIDDFLANGQAAKGLVEIIRQAGASVEAIGIVIEKSFQSGRKLLEDDGQRVVSLARIEKFENGKVVFGKADA</sequence>
<proteinExistence type="inferred from homology"/>
<reference key="1">
    <citation type="journal article" date="2007" name="J. Bacteriol.">
        <title>Genome-wide transcriptional changes in Streptococcus gordonii in response to competence signaling peptide.</title>
        <authorList>
            <person name="Vickerman M.M."/>
            <person name="Iobst S."/>
            <person name="Jesionowski A.M."/>
            <person name="Gill S.R."/>
        </authorList>
    </citation>
    <scope>NUCLEOTIDE SEQUENCE [LARGE SCALE GENOMIC DNA]</scope>
    <source>
        <strain>Challis / ATCC 35105 / BCRC 15272 / CH1 / DL1 / V288</strain>
    </source>
</reference>
<name>XPT_STRGC</name>
<comment type="function">
    <text evidence="1">Converts the preformed base xanthine, a product of nucleic acid breakdown, to xanthosine 5'-monophosphate (XMP), so it can be reused for RNA or DNA synthesis.</text>
</comment>
<comment type="catalytic activity">
    <reaction evidence="1">
        <text>XMP + diphosphate = xanthine + 5-phospho-alpha-D-ribose 1-diphosphate</text>
        <dbReference type="Rhea" id="RHEA:10800"/>
        <dbReference type="ChEBI" id="CHEBI:17712"/>
        <dbReference type="ChEBI" id="CHEBI:33019"/>
        <dbReference type="ChEBI" id="CHEBI:57464"/>
        <dbReference type="ChEBI" id="CHEBI:58017"/>
        <dbReference type="EC" id="2.4.2.22"/>
    </reaction>
</comment>
<comment type="pathway">
    <text evidence="1">Purine metabolism; XMP biosynthesis via salvage pathway; XMP from xanthine: step 1/1.</text>
</comment>
<comment type="subunit">
    <text evidence="1">Homodimer.</text>
</comment>
<comment type="subcellular location">
    <subcellularLocation>
        <location evidence="1">Cytoplasm</location>
    </subcellularLocation>
</comment>
<comment type="similarity">
    <text evidence="1">Belongs to the purine/pyrimidine phosphoribosyltransferase family. Xpt subfamily.</text>
</comment>
<gene>
    <name evidence="1" type="primary">xpt</name>
    <name type="ordered locus">SGO_1158</name>
</gene>
<evidence type="ECO:0000255" key="1">
    <source>
        <dbReference type="HAMAP-Rule" id="MF_01184"/>
    </source>
</evidence>